<proteinExistence type="inferred from homology"/>
<feature type="chain" id="PRO_0000073329" description="ATP synthase gamma chain">
    <location>
        <begin position="1"/>
        <end position="291"/>
    </location>
</feature>
<protein>
    <recommendedName>
        <fullName evidence="1">ATP synthase gamma chain</fullName>
    </recommendedName>
    <alternativeName>
        <fullName evidence="1">ATP synthase F1 sector gamma subunit</fullName>
    </alternativeName>
    <alternativeName>
        <fullName evidence="1">F-ATPase gamma subunit</fullName>
    </alternativeName>
</protein>
<sequence>MAVGKEILTKIRSVQNTQKITKAMQMVSTSKMRKTQERMRLARPYAEKVRMVMSHLAQTNTDHGIPLLESHREIRRVGFILITSDKGLCGGLNANVLKKFLAQVQEYRNQGIEEEIVCFGSKGLMACQSIGLNVVASAVNLGDTPKMEMLLGPLTELFQRYEKHEIDRIHLVYSGFVNTMRQEPRMEVLLPIGENVIGDSAPKSPFSWEYRYEPTALAVLEYLVRRYLESVVYQALSDNMASEQAARMVAMKAATDNAGNAIKELRLVYNKSRQAAITTELSEIVAGAAAV</sequence>
<dbReference type="EMBL" id="AE002098">
    <property type="protein sequence ID" value="AAF42264.1"/>
    <property type="molecule type" value="Genomic_DNA"/>
</dbReference>
<dbReference type="PIR" id="H81024">
    <property type="entry name" value="H81024"/>
</dbReference>
<dbReference type="RefSeq" id="NP_274929.1">
    <property type="nucleotide sequence ID" value="NC_003112.2"/>
</dbReference>
<dbReference type="RefSeq" id="WP_002225829.1">
    <property type="nucleotide sequence ID" value="NC_003112.2"/>
</dbReference>
<dbReference type="SMR" id="Q9JXQ1"/>
<dbReference type="FunCoup" id="Q9JXQ1">
    <property type="interactions" value="377"/>
</dbReference>
<dbReference type="STRING" id="122586.NMB1935"/>
<dbReference type="PaxDb" id="122586-NMB1935"/>
<dbReference type="KEGG" id="nme:NMB1935"/>
<dbReference type="PATRIC" id="fig|122586.8.peg.2463"/>
<dbReference type="HOGENOM" id="CLU_050669_0_1_4"/>
<dbReference type="InParanoid" id="Q9JXQ1"/>
<dbReference type="OrthoDB" id="9812769at2"/>
<dbReference type="Proteomes" id="UP000000425">
    <property type="component" value="Chromosome"/>
</dbReference>
<dbReference type="GO" id="GO:0005886">
    <property type="term" value="C:plasma membrane"/>
    <property type="evidence" value="ECO:0007669"/>
    <property type="project" value="UniProtKB-SubCell"/>
</dbReference>
<dbReference type="GO" id="GO:0045259">
    <property type="term" value="C:proton-transporting ATP synthase complex"/>
    <property type="evidence" value="ECO:0007669"/>
    <property type="project" value="UniProtKB-KW"/>
</dbReference>
<dbReference type="GO" id="GO:0005524">
    <property type="term" value="F:ATP binding"/>
    <property type="evidence" value="ECO:0007669"/>
    <property type="project" value="UniProtKB-UniRule"/>
</dbReference>
<dbReference type="GO" id="GO:0046933">
    <property type="term" value="F:proton-transporting ATP synthase activity, rotational mechanism"/>
    <property type="evidence" value="ECO:0007669"/>
    <property type="project" value="UniProtKB-UniRule"/>
</dbReference>
<dbReference type="GO" id="GO:0015986">
    <property type="term" value="P:proton motive force-driven ATP synthesis"/>
    <property type="evidence" value="ECO:0000318"/>
    <property type="project" value="GO_Central"/>
</dbReference>
<dbReference type="GO" id="GO:0042777">
    <property type="term" value="P:proton motive force-driven plasma membrane ATP synthesis"/>
    <property type="evidence" value="ECO:0007669"/>
    <property type="project" value="UniProtKB-UniRule"/>
</dbReference>
<dbReference type="CDD" id="cd12151">
    <property type="entry name" value="F1-ATPase_gamma"/>
    <property type="match status" value="1"/>
</dbReference>
<dbReference type="FunFam" id="1.10.287.80:FF:000005">
    <property type="entry name" value="ATP synthase gamma chain"/>
    <property type="match status" value="1"/>
</dbReference>
<dbReference type="FunFam" id="3.40.1380.10:FF:000008">
    <property type="entry name" value="ATP synthase gamma chain"/>
    <property type="match status" value="1"/>
</dbReference>
<dbReference type="Gene3D" id="3.40.1380.10">
    <property type="match status" value="1"/>
</dbReference>
<dbReference type="Gene3D" id="1.10.287.80">
    <property type="entry name" value="ATP synthase, gamma subunit, helix hairpin domain"/>
    <property type="match status" value="1"/>
</dbReference>
<dbReference type="HAMAP" id="MF_00815">
    <property type="entry name" value="ATP_synth_gamma_bact"/>
    <property type="match status" value="1"/>
</dbReference>
<dbReference type="InterPro" id="IPR035968">
    <property type="entry name" value="ATP_synth_F1_ATPase_gsu"/>
</dbReference>
<dbReference type="InterPro" id="IPR000131">
    <property type="entry name" value="ATP_synth_F1_gsu"/>
</dbReference>
<dbReference type="InterPro" id="IPR023632">
    <property type="entry name" value="ATP_synth_F1_gsu_CS"/>
</dbReference>
<dbReference type="NCBIfam" id="TIGR01146">
    <property type="entry name" value="ATPsyn_F1gamma"/>
    <property type="match status" value="1"/>
</dbReference>
<dbReference type="NCBIfam" id="NF004144">
    <property type="entry name" value="PRK05621.1-1"/>
    <property type="match status" value="1"/>
</dbReference>
<dbReference type="PANTHER" id="PTHR11693">
    <property type="entry name" value="ATP SYNTHASE GAMMA CHAIN"/>
    <property type="match status" value="1"/>
</dbReference>
<dbReference type="PANTHER" id="PTHR11693:SF22">
    <property type="entry name" value="ATP SYNTHASE SUBUNIT GAMMA, MITOCHONDRIAL"/>
    <property type="match status" value="1"/>
</dbReference>
<dbReference type="Pfam" id="PF00231">
    <property type="entry name" value="ATP-synt"/>
    <property type="match status" value="1"/>
</dbReference>
<dbReference type="PRINTS" id="PR00126">
    <property type="entry name" value="ATPASEGAMMA"/>
</dbReference>
<dbReference type="SUPFAM" id="SSF52943">
    <property type="entry name" value="ATP synthase (F1-ATPase), gamma subunit"/>
    <property type="match status" value="1"/>
</dbReference>
<dbReference type="PROSITE" id="PS00153">
    <property type="entry name" value="ATPASE_GAMMA"/>
    <property type="match status" value="1"/>
</dbReference>
<name>ATPG_NEIMB</name>
<evidence type="ECO:0000255" key="1">
    <source>
        <dbReference type="HAMAP-Rule" id="MF_00815"/>
    </source>
</evidence>
<gene>
    <name evidence="1" type="primary">atpG</name>
    <name type="ordered locus">NMB1935</name>
</gene>
<comment type="function">
    <text evidence="1">Produces ATP from ADP in the presence of a proton gradient across the membrane. The gamma chain is believed to be important in regulating ATPase activity and the flow of protons through the CF(0) complex.</text>
</comment>
<comment type="subunit">
    <text evidence="1">F-type ATPases have 2 components, CF(1) - the catalytic core - and CF(0) - the membrane proton channel. CF(1) has five subunits: alpha(3), beta(3), gamma(1), delta(1), epsilon(1). CF(0) has three main subunits: a, b and c.</text>
</comment>
<comment type="subcellular location">
    <subcellularLocation>
        <location evidence="1">Cell inner membrane</location>
        <topology evidence="1">Peripheral membrane protein</topology>
    </subcellularLocation>
</comment>
<comment type="similarity">
    <text evidence="1">Belongs to the ATPase gamma chain family.</text>
</comment>
<reference key="1">
    <citation type="journal article" date="2000" name="Science">
        <title>Complete genome sequence of Neisseria meningitidis serogroup B strain MC58.</title>
        <authorList>
            <person name="Tettelin H."/>
            <person name="Saunders N.J."/>
            <person name="Heidelberg J.F."/>
            <person name="Jeffries A.C."/>
            <person name="Nelson K.E."/>
            <person name="Eisen J.A."/>
            <person name="Ketchum K.A."/>
            <person name="Hood D.W."/>
            <person name="Peden J.F."/>
            <person name="Dodson R.J."/>
            <person name="Nelson W.C."/>
            <person name="Gwinn M.L."/>
            <person name="DeBoy R.T."/>
            <person name="Peterson J.D."/>
            <person name="Hickey E.K."/>
            <person name="Haft D.H."/>
            <person name="Salzberg S.L."/>
            <person name="White O."/>
            <person name="Fleischmann R.D."/>
            <person name="Dougherty B.A."/>
            <person name="Mason T.M."/>
            <person name="Ciecko A."/>
            <person name="Parksey D.S."/>
            <person name="Blair E."/>
            <person name="Cittone H."/>
            <person name="Clark E.B."/>
            <person name="Cotton M.D."/>
            <person name="Utterback T.R."/>
            <person name="Khouri H.M."/>
            <person name="Qin H."/>
            <person name="Vamathevan J.J."/>
            <person name="Gill J."/>
            <person name="Scarlato V."/>
            <person name="Masignani V."/>
            <person name="Pizza M."/>
            <person name="Grandi G."/>
            <person name="Sun L."/>
            <person name="Smith H.O."/>
            <person name="Fraser C.M."/>
            <person name="Moxon E.R."/>
            <person name="Rappuoli R."/>
            <person name="Venter J.C."/>
        </authorList>
    </citation>
    <scope>NUCLEOTIDE SEQUENCE [LARGE SCALE GENOMIC DNA]</scope>
    <source>
        <strain>ATCC BAA-335 / MC58</strain>
    </source>
</reference>
<keyword id="KW-0066">ATP synthesis</keyword>
<keyword id="KW-0997">Cell inner membrane</keyword>
<keyword id="KW-1003">Cell membrane</keyword>
<keyword id="KW-0139">CF(1)</keyword>
<keyword id="KW-0375">Hydrogen ion transport</keyword>
<keyword id="KW-0406">Ion transport</keyword>
<keyword id="KW-0472">Membrane</keyword>
<keyword id="KW-1185">Reference proteome</keyword>
<keyword id="KW-0813">Transport</keyword>
<organism>
    <name type="scientific">Neisseria meningitidis serogroup B (strain ATCC BAA-335 / MC58)</name>
    <dbReference type="NCBI Taxonomy" id="122586"/>
    <lineage>
        <taxon>Bacteria</taxon>
        <taxon>Pseudomonadati</taxon>
        <taxon>Pseudomonadota</taxon>
        <taxon>Betaproteobacteria</taxon>
        <taxon>Neisseriales</taxon>
        <taxon>Neisseriaceae</taxon>
        <taxon>Neisseria</taxon>
    </lineage>
</organism>
<accession>Q9JXQ1</accession>